<reference key="1">
    <citation type="journal article" date="2001" name="Nucleic Acids Res.">
        <title>The complete genome sequence of the murine respiratory pathogen Mycoplasma pulmonis.</title>
        <authorList>
            <person name="Chambaud I."/>
            <person name="Heilig R."/>
            <person name="Ferris S."/>
            <person name="Barbe V."/>
            <person name="Samson D."/>
            <person name="Galisson F."/>
            <person name="Moszer I."/>
            <person name="Dybvig K."/>
            <person name="Wroblewski H."/>
            <person name="Viari A."/>
            <person name="Rocha E.P.C."/>
            <person name="Blanchard A."/>
        </authorList>
    </citation>
    <scope>NUCLEOTIDE SEQUENCE [LARGE SCALE GENOMIC DNA]</scope>
    <source>
        <strain>UAB CTIP</strain>
    </source>
</reference>
<sequence>MQKEIFIAGGCFWGVERYFQKVKGVLDTKACYINGGFEGVKYKEVCEGSSHVEAVRVIYDNSKITEEDLWKLYLRIINPYSLNKQGNDRGVQYRIGLYSYDKDLLKKFSDLNEAFMKSEGKKNYIEIQKVEDVTLAEEYHQNYLLKNVNGYCHINLDDIPEEYQKQ</sequence>
<feature type="chain" id="PRO_0000138559" description="Peptide methionine sulfoxide reductase MsrA">
    <location>
        <begin position="1"/>
        <end position="166"/>
    </location>
</feature>
<feature type="active site" evidence="1">
    <location>
        <position position="11"/>
    </location>
</feature>
<evidence type="ECO:0000255" key="1">
    <source>
        <dbReference type="HAMAP-Rule" id="MF_01401"/>
    </source>
</evidence>
<evidence type="ECO:0000305" key="2"/>
<comment type="function">
    <text evidence="1">Has an important function as a repair enzyme for proteins that have been inactivated by oxidation. Catalyzes the reversible oxidation-reduction of methionine sulfoxide in proteins to methionine.</text>
</comment>
<comment type="catalytic activity">
    <reaction evidence="1">
        <text>L-methionyl-[protein] + [thioredoxin]-disulfide + H2O = L-methionyl-(S)-S-oxide-[protein] + [thioredoxin]-dithiol</text>
        <dbReference type="Rhea" id="RHEA:14217"/>
        <dbReference type="Rhea" id="RHEA-COMP:10698"/>
        <dbReference type="Rhea" id="RHEA-COMP:10700"/>
        <dbReference type="Rhea" id="RHEA-COMP:12313"/>
        <dbReference type="Rhea" id="RHEA-COMP:12315"/>
        <dbReference type="ChEBI" id="CHEBI:15377"/>
        <dbReference type="ChEBI" id="CHEBI:16044"/>
        <dbReference type="ChEBI" id="CHEBI:29950"/>
        <dbReference type="ChEBI" id="CHEBI:44120"/>
        <dbReference type="ChEBI" id="CHEBI:50058"/>
        <dbReference type="EC" id="1.8.4.11"/>
    </reaction>
</comment>
<comment type="catalytic activity">
    <reaction evidence="1">
        <text>[thioredoxin]-disulfide + L-methionine + H2O = L-methionine (S)-S-oxide + [thioredoxin]-dithiol</text>
        <dbReference type="Rhea" id="RHEA:19993"/>
        <dbReference type="Rhea" id="RHEA-COMP:10698"/>
        <dbReference type="Rhea" id="RHEA-COMP:10700"/>
        <dbReference type="ChEBI" id="CHEBI:15377"/>
        <dbReference type="ChEBI" id="CHEBI:29950"/>
        <dbReference type="ChEBI" id="CHEBI:50058"/>
        <dbReference type="ChEBI" id="CHEBI:57844"/>
        <dbReference type="ChEBI" id="CHEBI:58772"/>
        <dbReference type="EC" id="1.8.4.11"/>
    </reaction>
</comment>
<comment type="similarity">
    <text evidence="1">Belongs to the MsrA Met sulfoxide reductase family.</text>
</comment>
<comment type="sequence caution" evidence="2">
    <conflict type="erroneous initiation">
        <sequence resource="EMBL-CDS" id="CAC13951"/>
    </conflict>
</comment>
<organism>
    <name type="scientific">Mycoplasmopsis pulmonis (strain UAB CTIP)</name>
    <name type="common">Mycoplasma pulmonis</name>
    <dbReference type="NCBI Taxonomy" id="272635"/>
    <lineage>
        <taxon>Bacteria</taxon>
        <taxon>Bacillati</taxon>
        <taxon>Mycoplasmatota</taxon>
        <taxon>Mycoplasmoidales</taxon>
        <taxon>Metamycoplasmataceae</taxon>
        <taxon>Mycoplasmopsis</taxon>
    </lineage>
</organism>
<keyword id="KW-0560">Oxidoreductase</keyword>
<keyword id="KW-1185">Reference proteome</keyword>
<accession>Q98PE5</accession>
<dbReference type="EC" id="1.8.4.11" evidence="1"/>
<dbReference type="EMBL" id="AL445565">
    <property type="protein sequence ID" value="CAC13951.1"/>
    <property type="status" value="ALT_INIT"/>
    <property type="molecule type" value="Genomic_DNA"/>
</dbReference>
<dbReference type="PIR" id="B90609">
    <property type="entry name" value="B90609"/>
</dbReference>
<dbReference type="RefSeq" id="WP_041364267.1">
    <property type="nucleotide sequence ID" value="NC_002771.1"/>
</dbReference>
<dbReference type="SMR" id="Q98PE5"/>
<dbReference type="STRING" id="272635.gene:17577389"/>
<dbReference type="KEGG" id="mpu:MYPU_7780"/>
<dbReference type="eggNOG" id="COG0225">
    <property type="taxonomic scope" value="Bacteria"/>
</dbReference>
<dbReference type="HOGENOM" id="CLU_031040_10_2_14"/>
<dbReference type="BioCyc" id="MPUL272635:G1GT6-786-MONOMER"/>
<dbReference type="Proteomes" id="UP000000528">
    <property type="component" value="Chromosome"/>
</dbReference>
<dbReference type="GO" id="GO:0005737">
    <property type="term" value="C:cytoplasm"/>
    <property type="evidence" value="ECO:0007669"/>
    <property type="project" value="TreeGrafter"/>
</dbReference>
<dbReference type="GO" id="GO:0036456">
    <property type="term" value="F:L-methionine-(S)-S-oxide reductase activity"/>
    <property type="evidence" value="ECO:0007669"/>
    <property type="project" value="TreeGrafter"/>
</dbReference>
<dbReference type="GO" id="GO:0008113">
    <property type="term" value="F:peptide-methionine (S)-S-oxide reductase activity"/>
    <property type="evidence" value="ECO:0007669"/>
    <property type="project" value="UniProtKB-UniRule"/>
</dbReference>
<dbReference type="GO" id="GO:0034599">
    <property type="term" value="P:cellular response to oxidative stress"/>
    <property type="evidence" value="ECO:0007669"/>
    <property type="project" value="TreeGrafter"/>
</dbReference>
<dbReference type="GO" id="GO:0036211">
    <property type="term" value="P:protein modification process"/>
    <property type="evidence" value="ECO:0007669"/>
    <property type="project" value="UniProtKB-UniRule"/>
</dbReference>
<dbReference type="Gene3D" id="3.30.1060.10">
    <property type="entry name" value="Peptide methionine sulphoxide reductase MsrA"/>
    <property type="match status" value="1"/>
</dbReference>
<dbReference type="HAMAP" id="MF_01401">
    <property type="entry name" value="MsrA"/>
    <property type="match status" value="1"/>
</dbReference>
<dbReference type="InterPro" id="IPR002569">
    <property type="entry name" value="Met_Sox_Rdtase_MsrA_dom"/>
</dbReference>
<dbReference type="InterPro" id="IPR036509">
    <property type="entry name" value="Met_Sox_Rdtase_MsrA_sf"/>
</dbReference>
<dbReference type="InterPro" id="IPR050162">
    <property type="entry name" value="MsrA_MetSO_reductase"/>
</dbReference>
<dbReference type="NCBIfam" id="TIGR00401">
    <property type="entry name" value="msrA"/>
    <property type="match status" value="1"/>
</dbReference>
<dbReference type="PANTHER" id="PTHR42799">
    <property type="entry name" value="MITOCHONDRIAL PEPTIDE METHIONINE SULFOXIDE REDUCTASE"/>
    <property type="match status" value="1"/>
</dbReference>
<dbReference type="PANTHER" id="PTHR42799:SF2">
    <property type="entry name" value="MITOCHONDRIAL PEPTIDE METHIONINE SULFOXIDE REDUCTASE"/>
    <property type="match status" value="1"/>
</dbReference>
<dbReference type="Pfam" id="PF01625">
    <property type="entry name" value="PMSR"/>
    <property type="match status" value="1"/>
</dbReference>
<dbReference type="SUPFAM" id="SSF55068">
    <property type="entry name" value="Peptide methionine sulfoxide reductase"/>
    <property type="match status" value="1"/>
</dbReference>
<proteinExistence type="inferred from homology"/>
<name>MSRA_MYCPU</name>
<protein>
    <recommendedName>
        <fullName evidence="1">Peptide methionine sulfoxide reductase MsrA</fullName>
        <shortName evidence="1">Protein-methionine-S-oxide reductase</shortName>
        <ecNumber evidence="1">1.8.4.11</ecNumber>
    </recommendedName>
    <alternativeName>
        <fullName evidence="1">Peptide-methionine (S)-S-oxide reductase</fullName>
        <shortName evidence="1">Peptide Met(O) reductase</shortName>
    </alternativeName>
</protein>
<gene>
    <name evidence="1" type="primary">msrA</name>
    <name type="ordered locus">MYPU_7780</name>
</gene>